<accession>Q09FY1</accession>
<evidence type="ECO:0000255" key="1">
    <source>
        <dbReference type="HAMAP-Rule" id="MF_01379"/>
    </source>
</evidence>
<protein>
    <recommendedName>
        <fullName evidence="1">Photosystem II protein D1</fullName>
        <shortName evidence="1">PSII D1 protein</shortName>
        <ecNumber evidence="1">1.10.3.9</ecNumber>
    </recommendedName>
    <alternativeName>
        <fullName evidence="1">Photosystem II Q(B) protein</fullName>
    </alternativeName>
</protein>
<keyword id="KW-0007">Acetylation</keyword>
<keyword id="KW-0106">Calcium</keyword>
<keyword id="KW-0148">Chlorophyll</keyword>
<keyword id="KW-0150">Chloroplast</keyword>
<keyword id="KW-0157">Chromophore</keyword>
<keyword id="KW-0249">Electron transport</keyword>
<keyword id="KW-0359">Herbicide resistance</keyword>
<keyword id="KW-0408">Iron</keyword>
<keyword id="KW-0460">Magnesium</keyword>
<keyword id="KW-0464">Manganese</keyword>
<keyword id="KW-0472">Membrane</keyword>
<keyword id="KW-0479">Metal-binding</keyword>
<keyword id="KW-0560">Oxidoreductase</keyword>
<keyword id="KW-0597">Phosphoprotein</keyword>
<keyword id="KW-0602">Photosynthesis</keyword>
<keyword id="KW-0604">Photosystem II</keyword>
<keyword id="KW-0934">Plastid</keyword>
<keyword id="KW-0793">Thylakoid</keyword>
<keyword id="KW-0812">Transmembrane</keyword>
<keyword id="KW-1133">Transmembrane helix</keyword>
<keyword id="KW-0813">Transport</keyword>
<geneLocation type="chloroplast"/>
<sequence>MTAILERRESESLWGRFCNWITSTENRLYIGWFGVLMIPTLLTATSVFIIAFIAAPPVDIDGIREPVSGSLLYGNNIISGAIIPTSAAIGLHFYPIWEAASVDEWLYNGGPYELIVLHFLLGVACYMGREWELSFRLGMRPWIAVAYSAPVAAAAAVFLIYPIGQGSFSDGMPLGISGTFNFMIVFQAEHNILMHPFHMLGVAGVFGGSLFSAMHGSLVTSSLIRETTENESANAGYRFGQEEETYNIVAAHGYFGRLIFQYASFNNSRSLHFFLAAWPVVGIWFTALGISTMAFNLNGFNFNQSVVDSQGRVINTWADIINRANLGMEVMHERNAHNFPLDLAAVEAPSTNG</sequence>
<feature type="initiator methionine" description="Removed" evidence="1">
    <location>
        <position position="1"/>
    </location>
</feature>
<feature type="chain" id="PRO_0000340022" description="Photosystem II protein D1" evidence="1">
    <location>
        <begin position="2"/>
        <end position="344"/>
    </location>
</feature>
<feature type="propeptide" id="PRO_0000340023" evidence="1">
    <location>
        <begin position="345"/>
        <end position="353"/>
    </location>
</feature>
<feature type="transmembrane region" description="Helical" evidence="1">
    <location>
        <begin position="29"/>
        <end position="46"/>
    </location>
</feature>
<feature type="transmembrane region" description="Helical" evidence="1">
    <location>
        <begin position="118"/>
        <end position="133"/>
    </location>
</feature>
<feature type="transmembrane region" description="Helical" evidence="1">
    <location>
        <begin position="142"/>
        <end position="156"/>
    </location>
</feature>
<feature type="transmembrane region" description="Helical" evidence="1">
    <location>
        <begin position="197"/>
        <end position="218"/>
    </location>
</feature>
<feature type="transmembrane region" description="Helical" evidence="1">
    <location>
        <begin position="274"/>
        <end position="288"/>
    </location>
</feature>
<feature type="binding site" description="axial binding residue" evidence="1">
    <location>
        <position position="118"/>
    </location>
    <ligand>
        <name>chlorophyll a</name>
        <dbReference type="ChEBI" id="CHEBI:58416"/>
        <label>ChlzD1</label>
    </ligand>
    <ligandPart>
        <name>Mg</name>
        <dbReference type="ChEBI" id="CHEBI:25107"/>
    </ligandPart>
</feature>
<feature type="binding site" evidence="1">
    <location>
        <position position="126"/>
    </location>
    <ligand>
        <name>pheophytin a</name>
        <dbReference type="ChEBI" id="CHEBI:136840"/>
        <label>D1</label>
    </ligand>
</feature>
<feature type="binding site" evidence="1">
    <location>
        <position position="170"/>
    </location>
    <ligand>
        <name>[CaMn4O5] cluster</name>
        <dbReference type="ChEBI" id="CHEBI:189552"/>
    </ligand>
</feature>
<feature type="binding site" evidence="1">
    <location>
        <position position="189"/>
    </location>
    <ligand>
        <name>[CaMn4O5] cluster</name>
        <dbReference type="ChEBI" id="CHEBI:189552"/>
    </ligand>
</feature>
<feature type="binding site" description="axial binding residue" evidence="1">
    <location>
        <position position="198"/>
    </location>
    <ligand>
        <name>chlorophyll a</name>
        <dbReference type="ChEBI" id="CHEBI:58416"/>
        <label>PD1</label>
    </ligand>
    <ligandPart>
        <name>Mg</name>
        <dbReference type="ChEBI" id="CHEBI:25107"/>
    </ligandPart>
</feature>
<feature type="binding site" evidence="1">
    <location>
        <position position="215"/>
    </location>
    <ligand>
        <name>a quinone</name>
        <dbReference type="ChEBI" id="CHEBI:132124"/>
        <label>B</label>
    </ligand>
</feature>
<feature type="binding site" evidence="1">
    <location>
        <position position="215"/>
    </location>
    <ligand>
        <name>Fe cation</name>
        <dbReference type="ChEBI" id="CHEBI:24875"/>
        <note>ligand shared with heterodimeric partner</note>
    </ligand>
</feature>
<feature type="binding site" evidence="1">
    <location>
        <begin position="264"/>
        <end position="265"/>
    </location>
    <ligand>
        <name>a quinone</name>
        <dbReference type="ChEBI" id="CHEBI:132124"/>
        <label>B</label>
    </ligand>
</feature>
<feature type="binding site" evidence="1">
    <location>
        <position position="272"/>
    </location>
    <ligand>
        <name>Fe cation</name>
        <dbReference type="ChEBI" id="CHEBI:24875"/>
        <note>ligand shared with heterodimeric partner</note>
    </ligand>
</feature>
<feature type="binding site" evidence="1">
    <location>
        <position position="332"/>
    </location>
    <ligand>
        <name>[CaMn4O5] cluster</name>
        <dbReference type="ChEBI" id="CHEBI:189552"/>
    </ligand>
</feature>
<feature type="binding site" evidence="1">
    <location>
        <position position="333"/>
    </location>
    <ligand>
        <name>[CaMn4O5] cluster</name>
        <dbReference type="ChEBI" id="CHEBI:189552"/>
    </ligand>
</feature>
<feature type="binding site" evidence="1">
    <location>
        <position position="342"/>
    </location>
    <ligand>
        <name>[CaMn4O5] cluster</name>
        <dbReference type="ChEBI" id="CHEBI:189552"/>
    </ligand>
</feature>
<feature type="binding site" evidence="1">
    <location>
        <position position="344"/>
    </location>
    <ligand>
        <name>[CaMn4O5] cluster</name>
        <dbReference type="ChEBI" id="CHEBI:189552"/>
    </ligand>
</feature>
<feature type="site" description="Tyrosine radical intermediate" evidence="1">
    <location>
        <position position="161"/>
    </location>
</feature>
<feature type="site" description="Stabilizes free radical intermediate" evidence="1">
    <location>
        <position position="190"/>
    </location>
</feature>
<feature type="site" description="Cleavage; by CTPA" evidence="1">
    <location>
        <begin position="344"/>
        <end position="345"/>
    </location>
</feature>
<feature type="modified residue" description="N-acetylthreonine" evidence="1">
    <location>
        <position position="2"/>
    </location>
</feature>
<feature type="modified residue" description="Phosphothreonine" evidence="1">
    <location>
        <position position="2"/>
    </location>
</feature>
<name>PSBA_NANDO</name>
<proteinExistence type="inferred from homology"/>
<dbReference type="EC" id="1.10.3.9" evidence="1"/>
<dbReference type="EMBL" id="DQ923117">
    <property type="protein sequence ID" value="ABI49843.1"/>
    <property type="molecule type" value="Genomic_DNA"/>
</dbReference>
<dbReference type="RefSeq" id="YP_740630.1">
    <property type="nucleotide sequence ID" value="NC_008336.1"/>
</dbReference>
<dbReference type="SMR" id="Q09FY1"/>
<dbReference type="GeneID" id="4271579"/>
<dbReference type="GO" id="GO:0009535">
    <property type="term" value="C:chloroplast thylakoid membrane"/>
    <property type="evidence" value="ECO:0007669"/>
    <property type="project" value="UniProtKB-SubCell"/>
</dbReference>
<dbReference type="GO" id="GO:0009523">
    <property type="term" value="C:photosystem II"/>
    <property type="evidence" value="ECO:0007669"/>
    <property type="project" value="UniProtKB-KW"/>
</dbReference>
<dbReference type="GO" id="GO:0016168">
    <property type="term" value="F:chlorophyll binding"/>
    <property type="evidence" value="ECO:0007669"/>
    <property type="project" value="UniProtKB-UniRule"/>
</dbReference>
<dbReference type="GO" id="GO:0045156">
    <property type="term" value="F:electron transporter, transferring electrons within the cyclic electron transport pathway of photosynthesis activity"/>
    <property type="evidence" value="ECO:0007669"/>
    <property type="project" value="InterPro"/>
</dbReference>
<dbReference type="GO" id="GO:0005506">
    <property type="term" value="F:iron ion binding"/>
    <property type="evidence" value="ECO:0007669"/>
    <property type="project" value="UniProtKB-UniRule"/>
</dbReference>
<dbReference type="GO" id="GO:0016682">
    <property type="term" value="F:oxidoreductase activity, acting on diphenols and related substances as donors, oxygen as acceptor"/>
    <property type="evidence" value="ECO:0007669"/>
    <property type="project" value="UniProtKB-UniRule"/>
</dbReference>
<dbReference type="GO" id="GO:0010242">
    <property type="term" value="F:oxygen evolving activity"/>
    <property type="evidence" value="ECO:0007669"/>
    <property type="project" value="UniProtKB-EC"/>
</dbReference>
<dbReference type="GO" id="GO:0009772">
    <property type="term" value="P:photosynthetic electron transport in photosystem II"/>
    <property type="evidence" value="ECO:0007669"/>
    <property type="project" value="InterPro"/>
</dbReference>
<dbReference type="GO" id="GO:0009635">
    <property type="term" value="P:response to herbicide"/>
    <property type="evidence" value="ECO:0007669"/>
    <property type="project" value="UniProtKB-KW"/>
</dbReference>
<dbReference type="CDD" id="cd09289">
    <property type="entry name" value="Photosystem-II_D1"/>
    <property type="match status" value="1"/>
</dbReference>
<dbReference type="FunFam" id="1.20.85.10:FF:000002">
    <property type="entry name" value="Photosystem II protein D1"/>
    <property type="match status" value="1"/>
</dbReference>
<dbReference type="Gene3D" id="1.20.85.10">
    <property type="entry name" value="Photosystem II protein D1-like"/>
    <property type="match status" value="1"/>
</dbReference>
<dbReference type="HAMAP" id="MF_01379">
    <property type="entry name" value="PSII_PsbA_D1"/>
    <property type="match status" value="1"/>
</dbReference>
<dbReference type="InterPro" id="IPR055266">
    <property type="entry name" value="D1/D2"/>
</dbReference>
<dbReference type="InterPro" id="IPR036854">
    <property type="entry name" value="Photo_II_D1/D2_sf"/>
</dbReference>
<dbReference type="InterPro" id="IPR000484">
    <property type="entry name" value="Photo_RC_L/M"/>
</dbReference>
<dbReference type="InterPro" id="IPR055265">
    <property type="entry name" value="Photo_RC_L/M_CS"/>
</dbReference>
<dbReference type="InterPro" id="IPR005867">
    <property type="entry name" value="PSII_D1"/>
</dbReference>
<dbReference type="NCBIfam" id="TIGR01151">
    <property type="entry name" value="psbA"/>
    <property type="match status" value="1"/>
</dbReference>
<dbReference type="PANTHER" id="PTHR33149">
    <property type="entry name" value="PHOTOSYSTEM II PROTEIN D1"/>
    <property type="match status" value="1"/>
</dbReference>
<dbReference type="PANTHER" id="PTHR33149:SF55">
    <property type="entry name" value="PHOTOSYSTEM II PROTEIN D1"/>
    <property type="match status" value="1"/>
</dbReference>
<dbReference type="Pfam" id="PF00124">
    <property type="entry name" value="Photo_RC"/>
    <property type="match status" value="1"/>
</dbReference>
<dbReference type="PRINTS" id="PR00256">
    <property type="entry name" value="REACTNCENTRE"/>
</dbReference>
<dbReference type="SUPFAM" id="SSF81483">
    <property type="entry name" value="Bacterial photosystem II reaction centre, L and M subunits"/>
    <property type="match status" value="1"/>
</dbReference>
<dbReference type="PROSITE" id="PS00244">
    <property type="entry name" value="REACTION_CENTER"/>
    <property type="match status" value="1"/>
</dbReference>
<reference key="1">
    <citation type="journal article" date="2006" name="BMC Plant Biol.">
        <title>Rapid and accurate pyrosequencing of angiosperm plastid genomes.</title>
        <authorList>
            <person name="Moore M.J."/>
            <person name="Dhingra A."/>
            <person name="Soltis P.S."/>
            <person name="Shaw R."/>
            <person name="Farmerie W.G."/>
            <person name="Folta K.M."/>
            <person name="Soltis D.E."/>
        </authorList>
    </citation>
    <scope>NUCLEOTIDE SEQUENCE [LARGE SCALE GENOMIC DNA]</scope>
</reference>
<gene>
    <name evidence="1" type="primary">psbA</name>
</gene>
<organism>
    <name type="scientific">Nandina domestica</name>
    <name type="common">Heavenly bamboo</name>
    <dbReference type="NCBI Taxonomy" id="41776"/>
    <lineage>
        <taxon>Eukaryota</taxon>
        <taxon>Viridiplantae</taxon>
        <taxon>Streptophyta</taxon>
        <taxon>Embryophyta</taxon>
        <taxon>Tracheophyta</taxon>
        <taxon>Spermatophyta</taxon>
        <taxon>Magnoliopsida</taxon>
        <taxon>Ranunculales</taxon>
        <taxon>Berberidaceae</taxon>
        <taxon>Nandinoideae</taxon>
        <taxon>Nandineae</taxon>
        <taxon>Nandina</taxon>
    </lineage>
</organism>
<comment type="function">
    <text evidence="1">Photosystem II (PSII) is a light-driven water:plastoquinone oxidoreductase that uses light energy to abstract electrons from H(2)O, generating O(2) and a proton gradient subsequently used for ATP formation. It consists of a core antenna complex that captures photons, and an electron transfer chain that converts photonic excitation into a charge separation. The D1/D2 (PsbA/PsbD) reaction center heterodimer binds P680, the primary electron donor of PSII as well as several subsequent electron acceptors.</text>
</comment>
<comment type="catalytic activity">
    <reaction evidence="1">
        <text>2 a plastoquinone + 4 hnu + 2 H2O = 2 a plastoquinol + O2</text>
        <dbReference type="Rhea" id="RHEA:36359"/>
        <dbReference type="Rhea" id="RHEA-COMP:9561"/>
        <dbReference type="Rhea" id="RHEA-COMP:9562"/>
        <dbReference type="ChEBI" id="CHEBI:15377"/>
        <dbReference type="ChEBI" id="CHEBI:15379"/>
        <dbReference type="ChEBI" id="CHEBI:17757"/>
        <dbReference type="ChEBI" id="CHEBI:30212"/>
        <dbReference type="ChEBI" id="CHEBI:62192"/>
        <dbReference type="EC" id="1.10.3.9"/>
    </reaction>
</comment>
<comment type="cofactor">
    <text evidence="1">The D1/D2 heterodimer binds P680, chlorophylls that are the primary electron donor of PSII, and subsequent electron acceptors. It shares a non-heme iron and each subunit binds pheophytin, quinone, additional chlorophylls, carotenoids and lipids. D1 provides most of the ligands for the Mn4-Ca-O5 cluster of the oxygen-evolving complex (OEC). There is also a Cl(-1) ion associated with D1 and D2, which is required for oxygen evolution. The PSII complex binds additional chlorophylls, carotenoids and specific lipids.</text>
</comment>
<comment type="subunit">
    <text evidence="1">PSII is composed of 1 copy each of membrane proteins PsbA, PsbB, PsbC, PsbD, PsbE, PsbF, PsbH, PsbI, PsbJ, PsbK, PsbL, PsbM, PsbT, PsbX, PsbY, PsbZ, Psb30/Ycf12, at least 3 peripheral proteins of the oxygen-evolving complex and a large number of cofactors. It forms dimeric complexes.</text>
</comment>
<comment type="subcellular location">
    <subcellularLocation>
        <location evidence="1">Plastid</location>
        <location evidence="1">Chloroplast thylakoid membrane</location>
        <topology evidence="1">Multi-pass membrane protein</topology>
    </subcellularLocation>
</comment>
<comment type="PTM">
    <text evidence="1">Tyr-161 forms a radical intermediate that is referred to as redox-active TyrZ, YZ or Y-Z.</text>
</comment>
<comment type="PTM">
    <text evidence="1">C-terminally processed by CTPA; processing is essential to allow assembly of the oxygen-evolving complex and thus photosynthetic growth.</text>
</comment>
<comment type="miscellaneous">
    <text evidence="1">2 of the reaction center chlorophylls (ChlD1 and ChlD2) are entirely coordinated by water.</text>
</comment>
<comment type="miscellaneous">
    <text evidence="1">Herbicides such as atrazine, BNT, diuron or ioxynil bind in the Q(B) binding site and block subsequent electron transfer.</text>
</comment>
<comment type="similarity">
    <text evidence="1">Belongs to the reaction center PufL/M/PsbA/D family.</text>
</comment>